<evidence type="ECO:0000250" key="1"/>
<evidence type="ECO:0000255" key="2">
    <source>
        <dbReference type="PROSITE-ProRule" id="PRU00085"/>
    </source>
</evidence>
<evidence type="ECO:0000305" key="3"/>
<organism>
    <name type="scientific">Staphylococcus aureus (strain MRSA252)</name>
    <dbReference type="NCBI Taxonomy" id="282458"/>
    <lineage>
        <taxon>Bacteria</taxon>
        <taxon>Bacillati</taxon>
        <taxon>Bacillota</taxon>
        <taxon>Bacilli</taxon>
        <taxon>Bacillales</taxon>
        <taxon>Staphylococcaceae</taxon>
        <taxon>Staphylococcus</taxon>
    </lineage>
</organism>
<sequence>MLSKNLLEALNDQMNHEYFAAHAYMAMAAYCDKESYEGFANFFIQQAKEERFHGQKIYNYINDRGAHAEFRAVSAPKIDFSSILETFKDSLSQEQEVTRRFYNLSEIARQDKDYATISFLNWFLDEQVEEEAMFETHINYLTRIGDDSNALYLYEKELGTRTFDEE</sequence>
<protein>
    <recommendedName>
        <fullName>Bacterial non-heme ferritin</fullName>
        <ecNumber>1.16.3.2</ecNumber>
    </recommendedName>
</protein>
<feature type="initiator methionine" description="Removed" evidence="1">
    <location>
        <position position="1"/>
    </location>
</feature>
<feature type="chain" id="PRO_0000298965" description="Bacterial non-heme ferritin">
    <location>
        <begin position="2"/>
        <end position="166"/>
    </location>
</feature>
<feature type="domain" description="Ferritin-like diiron" evidence="2">
    <location>
        <begin position="2"/>
        <end position="145"/>
    </location>
</feature>
<feature type="binding site" evidence="2">
    <location>
        <position position="17"/>
    </location>
    <ligand>
        <name>Fe cation</name>
        <dbReference type="ChEBI" id="CHEBI:24875"/>
        <label>1</label>
    </ligand>
</feature>
<feature type="binding site" evidence="2">
    <location>
        <position position="50"/>
    </location>
    <ligand>
        <name>Fe cation</name>
        <dbReference type="ChEBI" id="CHEBI:24875"/>
        <label>1</label>
    </ligand>
</feature>
<feature type="binding site" evidence="2">
    <location>
        <position position="50"/>
    </location>
    <ligand>
        <name>Fe cation</name>
        <dbReference type="ChEBI" id="CHEBI:24875"/>
        <label>2</label>
    </ligand>
</feature>
<feature type="binding site" evidence="2">
    <location>
        <position position="53"/>
    </location>
    <ligand>
        <name>Fe cation</name>
        <dbReference type="ChEBI" id="CHEBI:24875"/>
        <label>1</label>
    </ligand>
</feature>
<feature type="binding site" evidence="2">
    <location>
        <position position="94"/>
    </location>
    <ligand>
        <name>Fe cation</name>
        <dbReference type="ChEBI" id="CHEBI:24875"/>
        <label>2</label>
    </ligand>
</feature>
<feature type="binding site" evidence="2">
    <location>
        <position position="127"/>
    </location>
    <ligand>
        <name>Fe cation</name>
        <dbReference type="ChEBI" id="CHEBI:24875"/>
        <label>2</label>
    </ligand>
</feature>
<proteinExistence type="inferred from homology"/>
<gene>
    <name type="primary">ftnA</name>
    <name type="ordered locus">SAR1984</name>
</gene>
<reference key="1">
    <citation type="journal article" date="2004" name="Proc. Natl. Acad. Sci. U.S.A.">
        <title>Complete genomes of two clinical Staphylococcus aureus strains: evidence for the rapid evolution of virulence and drug resistance.</title>
        <authorList>
            <person name="Holden M.T.G."/>
            <person name="Feil E.J."/>
            <person name="Lindsay J.A."/>
            <person name="Peacock S.J."/>
            <person name="Day N.P.J."/>
            <person name="Enright M.C."/>
            <person name="Foster T.J."/>
            <person name="Moore C.E."/>
            <person name="Hurst L."/>
            <person name="Atkin R."/>
            <person name="Barron A."/>
            <person name="Bason N."/>
            <person name="Bentley S.D."/>
            <person name="Chillingworth C."/>
            <person name="Chillingworth T."/>
            <person name="Churcher C."/>
            <person name="Clark L."/>
            <person name="Corton C."/>
            <person name="Cronin A."/>
            <person name="Doggett J."/>
            <person name="Dowd L."/>
            <person name="Feltwell T."/>
            <person name="Hance Z."/>
            <person name="Harris B."/>
            <person name="Hauser H."/>
            <person name="Holroyd S."/>
            <person name="Jagels K."/>
            <person name="James K.D."/>
            <person name="Lennard N."/>
            <person name="Line A."/>
            <person name="Mayes R."/>
            <person name="Moule S."/>
            <person name="Mungall K."/>
            <person name="Ormond D."/>
            <person name="Quail M.A."/>
            <person name="Rabbinowitsch E."/>
            <person name="Rutherford K.M."/>
            <person name="Sanders M."/>
            <person name="Sharp S."/>
            <person name="Simmonds M."/>
            <person name="Stevens K."/>
            <person name="Whitehead S."/>
            <person name="Barrell B.G."/>
            <person name="Spratt B.G."/>
            <person name="Parkhill J."/>
        </authorList>
    </citation>
    <scope>NUCLEOTIDE SEQUENCE [LARGE SCALE GENOMIC DNA]</scope>
    <source>
        <strain>MRSA252</strain>
    </source>
</reference>
<accession>Q6GFG4</accession>
<dbReference type="EC" id="1.16.3.2"/>
<dbReference type="EMBL" id="BX571856">
    <property type="protein sequence ID" value="CAG40970.1"/>
    <property type="molecule type" value="Genomic_DNA"/>
</dbReference>
<dbReference type="RefSeq" id="WP_000949466.1">
    <property type="nucleotide sequence ID" value="NC_002952.2"/>
</dbReference>
<dbReference type="SMR" id="Q6GFG4"/>
<dbReference type="KEGG" id="sar:SAR1984"/>
<dbReference type="HOGENOM" id="CLU_065681_1_2_9"/>
<dbReference type="Proteomes" id="UP000000596">
    <property type="component" value="Chromosome"/>
</dbReference>
<dbReference type="GO" id="GO:0005829">
    <property type="term" value="C:cytosol"/>
    <property type="evidence" value="ECO:0007669"/>
    <property type="project" value="TreeGrafter"/>
</dbReference>
<dbReference type="GO" id="GO:0008199">
    <property type="term" value="F:ferric iron binding"/>
    <property type="evidence" value="ECO:0007669"/>
    <property type="project" value="InterPro"/>
</dbReference>
<dbReference type="GO" id="GO:0008198">
    <property type="term" value="F:ferrous iron binding"/>
    <property type="evidence" value="ECO:0007669"/>
    <property type="project" value="TreeGrafter"/>
</dbReference>
<dbReference type="GO" id="GO:0004322">
    <property type="term" value="F:ferroxidase activity"/>
    <property type="evidence" value="ECO:0007669"/>
    <property type="project" value="TreeGrafter"/>
</dbReference>
<dbReference type="GO" id="GO:0006879">
    <property type="term" value="P:intracellular iron ion homeostasis"/>
    <property type="evidence" value="ECO:0007669"/>
    <property type="project" value="UniProtKB-KW"/>
</dbReference>
<dbReference type="GO" id="GO:0006826">
    <property type="term" value="P:iron ion transport"/>
    <property type="evidence" value="ECO:0007669"/>
    <property type="project" value="InterPro"/>
</dbReference>
<dbReference type="CDD" id="cd01055">
    <property type="entry name" value="Nonheme_Ferritin"/>
    <property type="match status" value="1"/>
</dbReference>
<dbReference type="FunFam" id="1.20.1260.10:FF:000001">
    <property type="entry name" value="Non-heme ferritin"/>
    <property type="match status" value="1"/>
</dbReference>
<dbReference type="Gene3D" id="1.20.1260.10">
    <property type="match status" value="1"/>
</dbReference>
<dbReference type="InterPro" id="IPR001519">
    <property type="entry name" value="Ferritin"/>
</dbReference>
<dbReference type="InterPro" id="IPR012347">
    <property type="entry name" value="Ferritin-like"/>
</dbReference>
<dbReference type="InterPro" id="IPR009040">
    <property type="entry name" value="Ferritin-like_diiron"/>
</dbReference>
<dbReference type="InterPro" id="IPR009078">
    <property type="entry name" value="Ferritin-like_SF"/>
</dbReference>
<dbReference type="InterPro" id="IPR008331">
    <property type="entry name" value="Ferritin_DPS_dom"/>
</dbReference>
<dbReference type="InterPro" id="IPR041719">
    <property type="entry name" value="Ferritin_prok"/>
</dbReference>
<dbReference type="PANTHER" id="PTHR11431:SF127">
    <property type="entry name" value="BACTERIAL NON-HEME FERRITIN"/>
    <property type="match status" value="1"/>
</dbReference>
<dbReference type="PANTHER" id="PTHR11431">
    <property type="entry name" value="FERRITIN"/>
    <property type="match status" value="1"/>
</dbReference>
<dbReference type="Pfam" id="PF00210">
    <property type="entry name" value="Ferritin"/>
    <property type="match status" value="1"/>
</dbReference>
<dbReference type="SUPFAM" id="SSF47240">
    <property type="entry name" value="Ferritin-like"/>
    <property type="match status" value="1"/>
</dbReference>
<dbReference type="PROSITE" id="PS50905">
    <property type="entry name" value="FERRITIN_LIKE"/>
    <property type="match status" value="1"/>
</dbReference>
<name>FTN_STAAR</name>
<keyword id="KW-0963">Cytoplasm</keyword>
<keyword id="KW-0408">Iron</keyword>
<keyword id="KW-0409">Iron storage</keyword>
<keyword id="KW-0479">Metal-binding</keyword>
<keyword id="KW-0560">Oxidoreductase</keyword>
<comment type="function">
    <text evidence="1">Iron-storage protein.</text>
</comment>
<comment type="catalytic activity">
    <reaction>
        <text>4 Fe(2+) + O2 + 6 H2O = 4 iron(III) oxide-hydroxide + 12 H(+)</text>
        <dbReference type="Rhea" id="RHEA:11972"/>
        <dbReference type="ChEBI" id="CHEBI:15377"/>
        <dbReference type="ChEBI" id="CHEBI:15378"/>
        <dbReference type="ChEBI" id="CHEBI:15379"/>
        <dbReference type="ChEBI" id="CHEBI:29033"/>
        <dbReference type="ChEBI" id="CHEBI:78619"/>
        <dbReference type="EC" id="1.16.3.2"/>
    </reaction>
</comment>
<comment type="subcellular location">
    <subcellularLocation>
        <location evidence="1">Cytoplasm</location>
    </subcellularLocation>
</comment>
<comment type="similarity">
    <text evidence="3">Belongs to the ferritin family. Prokaryotic subfamily.</text>
</comment>